<gene>
    <name evidence="1" type="primary">atpB</name>
</gene>
<organism>
    <name type="scientific">Coffea arabica</name>
    <name type="common">Arabian coffee</name>
    <dbReference type="NCBI Taxonomy" id="13443"/>
    <lineage>
        <taxon>Eukaryota</taxon>
        <taxon>Viridiplantae</taxon>
        <taxon>Streptophyta</taxon>
        <taxon>Embryophyta</taxon>
        <taxon>Tracheophyta</taxon>
        <taxon>Spermatophyta</taxon>
        <taxon>Magnoliopsida</taxon>
        <taxon>eudicotyledons</taxon>
        <taxon>Gunneridae</taxon>
        <taxon>Pentapetalae</taxon>
        <taxon>asterids</taxon>
        <taxon>lamiids</taxon>
        <taxon>Gentianales</taxon>
        <taxon>Rubiaceae</taxon>
        <taxon>Ixoroideae</taxon>
        <taxon>Gardenieae complex</taxon>
        <taxon>Bertiereae - Coffeeae clade</taxon>
        <taxon>Coffeeae</taxon>
        <taxon>Coffea</taxon>
    </lineage>
</organism>
<sequence>MKINPTTSGSGVSTLEKKNMGRIVQIIGPVLDVAFPAGKMPNIYNALVVKGRDTVGQPINVTCEVQQLLGNNRVRAVAMSSTDGLTRGMEVIDTGAPLSVPVGGATLGRIFNVLGEPVDNLGAVDTRTTSPIHRSAPAFIQLDTKLSIFETGIKVVDLLAPYRRGGKIGLFGGAGVGKTVLIMELINNIAKAHGGVSVFGGVGERTREGNDLYMEMKESGVINKENIAESKVALVYGQMNEPPGARMRVGLTALTMAEYFRDVNEQDVLLFIDNIFRFVQAGSEVSALLGRMPSAVGYQPTLSTEMGSLQERITSTKEGSITSIQAVYVPADDLTDPAPATTFAHLDATTVLSRGLAAKGIYPAVDPLDSTSTMLQPRIVGEEHYETAQRVKQTLQRYKELQDIIAILGLDELSEEDRLTVARARKIERFLSQPFFVAEVFTGSPGKYVGLAETIRGFQLILSGELDSLPEQAFYLVGNIDEATAKAMNLEMENNLKK</sequence>
<keyword id="KW-0066">ATP synthesis</keyword>
<keyword id="KW-0067">ATP-binding</keyword>
<keyword id="KW-0139">CF(1)</keyword>
<keyword id="KW-0150">Chloroplast</keyword>
<keyword id="KW-0375">Hydrogen ion transport</keyword>
<keyword id="KW-0406">Ion transport</keyword>
<keyword id="KW-0472">Membrane</keyword>
<keyword id="KW-0547">Nucleotide-binding</keyword>
<keyword id="KW-0934">Plastid</keyword>
<keyword id="KW-1185">Reference proteome</keyword>
<keyword id="KW-0793">Thylakoid</keyword>
<keyword id="KW-1278">Translocase</keyword>
<keyword id="KW-0813">Transport</keyword>
<accession>A0A342</accession>
<protein>
    <recommendedName>
        <fullName evidence="1">ATP synthase subunit beta, chloroplastic</fullName>
        <ecNumber evidence="1">7.1.2.2</ecNumber>
    </recommendedName>
    <alternativeName>
        <fullName evidence="1">ATP synthase F1 sector subunit beta</fullName>
    </alternativeName>
    <alternativeName>
        <fullName evidence="1">F-ATPase subunit beta</fullName>
    </alternativeName>
</protein>
<evidence type="ECO:0000255" key="1">
    <source>
        <dbReference type="HAMAP-Rule" id="MF_01347"/>
    </source>
</evidence>
<name>ATPB_COFAR</name>
<geneLocation type="chloroplast"/>
<proteinExistence type="inferred from homology"/>
<comment type="function">
    <text evidence="1">Produces ATP from ADP in the presence of a proton gradient across the membrane. The catalytic sites are hosted primarily by the beta subunits.</text>
</comment>
<comment type="catalytic activity">
    <reaction evidence="1">
        <text>ATP + H2O + 4 H(+)(in) = ADP + phosphate + 5 H(+)(out)</text>
        <dbReference type="Rhea" id="RHEA:57720"/>
        <dbReference type="ChEBI" id="CHEBI:15377"/>
        <dbReference type="ChEBI" id="CHEBI:15378"/>
        <dbReference type="ChEBI" id="CHEBI:30616"/>
        <dbReference type="ChEBI" id="CHEBI:43474"/>
        <dbReference type="ChEBI" id="CHEBI:456216"/>
        <dbReference type="EC" id="7.1.2.2"/>
    </reaction>
</comment>
<comment type="subunit">
    <text evidence="1">F-type ATPases have 2 components, CF(1) - the catalytic core - and CF(0) - the membrane proton channel. CF(1) has five subunits: alpha(3), beta(3), gamma(1), delta(1), epsilon(1). CF(0) has four main subunits: a(1), b(1), b'(1) and c(9-12).</text>
</comment>
<comment type="subcellular location">
    <subcellularLocation>
        <location evidence="1">Plastid</location>
        <location evidence="1">Chloroplast thylakoid membrane</location>
        <topology evidence="1">Peripheral membrane protein</topology>
    </subcellularLocation>
</comment>
<comment type="similarity">
    <text evidence="1">Belongs to the ATPase alpha/beta chains family.</text>
</comment>
<feature type="chain" id="PRO_0000275179" description="ATP synthase subunit beta, chloroplastic">
    <location>
        <begin position="1"/>
        <end position="498"/>
    </location>
</feature>
<feature type="binding site" evidence="1">
    <location>
        <begin position="172"/>
        <end position="179"/>
    </location>
    <ligand>
        <name>ATP</name>
        <dbReference type="ChEBI" id="CHEBI:30616"/>
    </ligand>
</feature>
<reference key="1">
    <citation type="journal article" date="2007" name="Plant Biotechnol. J.">
        <title>The complete nucleotide sequence of the coffee (Coffea arabica L.) chloroplast genome: organization and implications for biotechnology and phylogenetic relationships amongst angiosperms.</title>
        <authorList>
            <person name="Samson N."/>
            <person name="Bausher M.G."/>
            <person name="Lee S.-B."/>
            <person name="Jansen R.K."/>
            <person name="Daniell H."/>
        </authorList>
    </citation>
    <scope>NUCLEOTIDE SEQUENCE [LARGE SCALE GENOMIC DNA]</scope>
</reference>
<dbReference type="EC" id="7.1.2.2" evidence="1"/>
<dbReference type="EMBL" id="EF044213">
    <property type="protein sequence ID" value="ABJ89686.1"/>
    <property type="molecule type" value="Genomic_DNA"/>
</dbReference>
<dbReference type="RefSeq" id="YP_817489.1">
    <property type="nucleotide sequence ID" value="NC_008535.1"/>
</dbReference>
<dbReference type="SMR" id="A0A342"/>
<dbReference type="GeneID" id="4421770"/>
<dbReference type="OrthoDB" id="149879at2759"/>
<dbReference type="Proteomes" id="UP000515148">
    <property type="component" value="Chloroplast Pltd"/>
</dbReference>
<dbReference type="GO" id="GO:0009535">
    <property type="term" value="C:chloroplast thylakoid membrane"/>
    <property type="evidence" value="ECO:0007669"/>
    <property type="project" value="UniProtKB-SubCell"/>
</dbReference>
<dbReference type="GO" id="GO:0005739">
    <property type="term" value="C:mitochondrion"/>
    <property type="evidence" value="ECO:0007669"/>
    <property type="project" value="GOC"/>
</dbReference>
<dbReference type="GO" id="GO:0045259">
    <property type="term" value="C:proton-transporting ATP synthase complex"/>
    <property type="evidence" value="ECO:0007669"/>
    <property type="project" value="UniProtKB-KW"/>
</dbReference>
<dbReference type="GO" id="GO:0005524">
    <property type="term" value="F:ATP binding"/>
    <property type="evidence" value="ECO:0007669"/>
    <property type="project" value="UniProtKB-UniRule"/>
</dbReference>
<dbReference type="GO" id="GO:0016887">
    <property type="term" value="F:ATP hydrolysis activity"/>
    <property type="evidence" value="ECO:0007669"/>
    <property type="project" value="InterPro"/>
</dbReference>
<dbReference type="GO" id="GO:0046933">
    <property type="term" value="F:proton-transporting ATP synthase activity, rotational mechanism"/>
    <property type="evidence" value="ECO:0007669"/>
    <property type="project" value="UniProtKB-UniRule"/>
</dbReference>
<dbReference type="GO" id="GO:0042776">
    <property type="term" value="P:proton motive force-driven mitochondrial ATP synthesis"/>
    <property type="evidence" value="ECO:0007669"/>
    <property type="project" value="TreeGrafter"/>
</dbReference>
<dbReference type="CDD" id="cd18110">
    <property type="entry name" value="ATP-synt_F1_beta_C"/>
    <property type="match status" value="1"/>
</dbReference>
<dbReference type="CDD" id="cd18115">
    <property type="entry name" value="ATP-synt_F1_beta_N"/>
    <property type="match status" value="1"/>
</dbReference>
<dbReference type="CDD" id="cd01133">
    <property type="entry name" value="F1-ATPase_beta_CD"/>
    <property type="match status" value="1"/>
</dbReference>
<dbReference type="FunFam" id="1.10.1140.10:FF:000001">
    <property type="entry name" value="ATP synthase subunit beta"/>
    <property type="match status" value="1"/>
</dbReference>
<dbReference type="FunFam" id="3.40.50.12240:FF:000006">
    <property type="entry name" value="ATP synthase subunit beta"/>
    <property type="match status" value="1"/>
</dbReference>
<dbReference type="FunFam" id="3.40.50.300:FF:000004">
    <property type="entry name" value="ATP synthase subunit beta"/>
    <property type="match status" value="1"/>
</dbReference>
<dbReference type="FunFam" id="2.40.10.170:FF:000002">
    <property type="entry name" value="ATP synthase subunit beta, chloroplastic"/>
    <property type="match status" value="1"/>
</dbReference>
<dbReference type="Gene3D" id="2.40.10.170">
    <property type="match status" value="1"/>
</dbReference>
<dbReference type="Gene3D" id="1.10.1140.10">
    <property type="entry name" value="Bovine Mitochondrial F1-atpase, Atp Synthase Beta Chain, Chain D, domain 3"/>
    <property type="match status" value="1"/>
</dbReference>
<dbReference type="Gene3D" id="3.40.50.300">
    <property type="entry name" value="P-loop containing nucleotide triphosphate hydrolases"/>
    <property type="match status" value="1"/>
</dbReference>
<dbReference type="HAMAP" id="MF_01347">
    <property type="entry name" value="ATP_synth_beta_bact"/>
    <property type="match status" value="1"/>
</dbReference>
<dbReference type="InterPro" id="IPR003593">
    <property type="entry name" value="AAA+_ATPase"/>
</dbReference>
<dbReference type="InterPro" id="IPR055190">
    <property type="entry name" value="ATP-synt_VA_C"/>
</dbReference>
<dbReference type="InterPro" id="IPR005722">
    <property type="entry name" value="ATP_synth_F1_bsu"/>
</dbReference>
<dbReference type="InterPro" id="IPR020003">
    <property type="entry name" value="ATPase_a/bsu_AS"/>
</dbReference>
<dbReference type="InterPro" id="IPR050053">
    <property type="entry name" value="ATPase_alpha/beta_chains"/>
</dbReference>
<dbReference type="InterPro" id="IPR004100">
    <property type="entry name" value="ATPase_F1/V1/A1_a/bsu_N"/>
</dbReference>
<dbReference type="InterPro" id="IPR036121">
    <property type="entry name" value="ATPase_F1/V1/A1_a/bsu_N_sf"/>
</dbReference>
<dbReference type="InterPro" id="IPR000194">
    <property type="entry name" value="ATPase_F1/V1/A1_a/bsu_nucl-bd"/>
</dbReference>
<dbReference type="InterPro" id="IPR024034">
    <property type="entry name" value="ATPase_F1/V1_b/a_C"/>
</dbReference>
<dbReference type="InterPro" id="IPR027417">
    <property type="entry name" value="P-loop_NTPase"/>
</dbReference>
<dbReference type="NCBIfam" id="TIGR01039">
    <property type="entry name" value="atpD"/>
    <property type="match status" value="1"/>
</dbReference>
<dbReference type="PANTHER" id="PTHR15184">
    <property type="entry name" value="ATP SYNTHASE"/>
    <property type="match status" value="1"/>
</dbReference>
<dbReference type="PANTHER" id="PTHR15184:SF71">
    <property type="entry name" value="ATP SYNTHASE SUBUNIT BETA, MITOCHONDRIAL"/>
    <property type="match status" value="1"/>
</dbReference>
<dbReference type="Pfam" id="PF00006">
    <property type="entry name" value="ATP-synt_ab"/>
    <property type="match status" value="1"/>
</dbReference>
<dbReference type="Pfam" id="PF02874">
    <property type="entry name" value="ATP-synt_ab_N"/>
    <property type="match status" value="1"/>
</dbReference>
<dbReference type="Pfam" id="PF22919">
    <property type="entry name" value="ATP-synt_VA_C"/>
    <property type="match status" value="1"/>
</dbReference>
<dbReference type="SMART" id="SM00382">
    <property type="entry name" value="AAA"/>
    <property type="match status" value="1"/>
</dbReference>
<dbReference type="SUPFAM" id="SSF47917">
    <property type="entry name" value="C-terminal domain of alpha and beta subunits of F1 ATP synthase"/>
    <property type="match status" value="1"/>
</dbReference>
<dbReference type="SUPFAM" id="SSF50615">
    <property type="entry name" value="N-terminal domain of alpha and beta subunits of F1 ATP synthase"/>
    <property type="match status" value="1"/>
</dbReference>
<dbReference type="SUPFAM" id="SSF52540">
    <property type="entry name" value="P-loop containing nucleoside triphosphate hydrolases"/>
    <property type="match status" value="1"/>
</dbReference>
<dbReference type="PROSITE" id="PS00152">
    <property type="entry name" value="ATPASE_ALPHA_BETA"/>
    <property type="match status" value="1"/>
</dbReference>